<reference key="1">
    <citation type="journal article" date="1995" name="Nat. Genet.">
        <title>Analysis of the nucleotide sequence of chromosome VI from Saccharomyces cerevisiae.</title>
        <authorList>
            <person name="Murakami Y."/>
            <person name="Naitou M."/>
            <person name="Hagiwara H."/>
            <person name="Shibata T."/>
            <person name="Ozawa M."/>
            <person name="Sasanuma S."/>
            <person name="Sasanuma M."/>
            <person name="Tsuchiya Y."/>
            <person name="Soeda E."/>
            <person name="Yokoyama K."/>
            <person name="Yamazaki M."/>
            <person name="Tashiro H."/>
            <person name="Eki T."/>
        </authorList>
    </citation>
    <scope>NUCLEOTIDE SEQUENCE [LARGE SCALE GENOMIC DNA]</scope>
    <source>
        <strain>ATCC 204508 / S288c</strain>
    </source>
</reference>
<reference key="2">
    <citation type="journal article" date="2014" name="G3 (Bethesda)">
        <title>The reference genome sequence of Saccharomyces cerevisiae: Then and now.</title>
        <authorList>
            <person name="Engel S.R."/>
            <person name="Dietrich F.S."/>
            <person name="Fisk D.G."/>
            <person name="Binkley G."/>
            <person name="Balakrishnan R."/>
            <person name="Costanzo M.C."/>
            <person name="Dwight S.S."/>
            <person name="Hitz B.C."/>
            <person name="Karra K."/>
            <person name="Nash R.S."/>
            <person name="Weng S."/>
            <person name="Wong E.D."/>
            <person name="Lloyd P."/>
            <person name="Skrzypek M.S."/>
            <person name="Miyasato S.R."/>
            <person name="Simison M."/>
            <person name="Cherry J.M."/>
        </authorList>
    </citation>
    <scope>GENOME REANNOTATION</scope>
    <source>
        <strain>ATCC 204508 / S288c</strain>
    </source>
</reference>
<reference key="3">
    <citation type="journal article" date="2007" name="Genome Res.">
        <title>Approaching a complete repository of sequence-verified protein-encoding clones for Saccharomyces cerevisiae.</title>
        <authorList>
            <person name="Hu Y."/>
            <person name="Rolfs A."/>
            <person name="Bhullar B."/>
            <person name="Murthy T.V.S."/>
            <person name="Zhu C."/>
            <person name="Berger M.F."/>
            <person name="Camargo A.A."/>
            <person name="Kelley F."/>
            <person name="McCarron S."/>
            <person name="Jepson D."/>
            <person name="Richardson A."/>
            <person name="Raphael J."/>
            <person name="Moreira D."/>
            <person name="Taycher E."/>
            <person name="Zuo D."/>
            <person name="Mohr S."/>
            <person name="Kane M.F."/>
            <person name="Williamson J."/>
            <person name="Simpson A.J.G."/>
            <person name="Bulyk M.L."/>
            <person name="Harlow E."/>
            <person name="Marsischky G."/>
            <person name="Kolodner R.D."/>
            <person name="LaBaer J."/>
        </authorList>
    </citation>
    <scope>NUCLEOTIDE SEQUENCE [GENOMIC DNA]</scope>
    <source>
        <strain>ATCC 204508 / S288c</strain>
    </source>
</reference>
<reference key="4">
    <citation type="journal article" date="2003" name="Mol. Cell">
        <title>Involvement of actin-related proteins in ATP-dependent chromatin remodeling.</title>
        <authorList>
            <person name="Shen X."/>
            <person name="Ranallo R."/>
            <person name="Choi E."/>
            <person name="Wu C."/>
        </authorList>
    </citation>
    <scope>PARTIAL PROTEIN SEQUENCE</scope>
    <scope>IDENTIFICATION IN THE INO80 COMPLEX</scope>
</reference>
<reference key="5">
    <citation type="journal article" date="2003" name="Nature">
        <title>Global analysis of protein localization in budding yeast.</title>
        <authorList>
            <person name="Huh W.-K."/>
            <person name="Falvo J.V."/>
            <person name="Gerke L.C."/>
            <person name="Carroll A.S."/>
            <person name="Howson R.W."/>
            <person name="Weissman J.S."/>
            <person name="O'Shea E.K."/>
        </authorList>
    </citation>
    <scope>SUBCELLULAR LOCATION [LARGE SCALE ANALYSIS]</scope>
</reference>
<reference key="6">
    <citation type="journal article" date="2003" name="Nature">
        <title>Global analysis of protein expression in yeast.</title>
        <authorList>
            <person name="Ghaemmaghami S."/>
            <person name="Huh W.-K."/>
            <person name="Bower K."/>
            <person name="Howson R.W."/>
            <person name="Belle A."/>
            <person name="Dephoure N."/>
            <person name="O'Shea E.K."/>
            <person name="Weissman J.S."/>
        </authorList>
    </citation>
    <scope>LEVEL OF PROTEIN EXPRESSION [LARGE SCALE ANALYSIS]</scope>
</reference>
<reference key="7">
    <citation type="journal article" date="2007" name="J. Proteome Res.">
        <title>Large-scale phosphorylation analysis of alpha-factor-arrested Saccharomyces cerevisiae.</title>
        <authorList>
            <person name="Li X."/>
            <person name="Gerber S.A."/>
            <person name="Rudner A.D."/>
            <person name="Beausoleil S.A."/>
            <person name="Haas W."/>
            <person name="Villen J."/>
            <person name="Elias J.E."/>
            <person name="Gygi S.P."/>
        </authorList>
    </citation>
    <scope>IDENTIFICATION BY MASS SPECTROMETRY [LARGE SCALE ANALYSIS]</scope>
    <source>
        <strain>ADR376</strain>
    </source>
</reference>
<reference key="8">
    <citation type="journal article" date="2008" name="Mol. Cell. Proteomics">
        <title>A multidimensional chromatography technology for in-depth phosphoproteome analysis.</title>
        <authorList>
            <person name="Albuquerque C.P."/>
            <person name="Smolka M.B."/>
            <person name="Payne S.H."/>
            <person name="Bafna V."/>
            <person name="Eng J."/>
            <person name="Zhou H."/>
        </authorList>
    </citation>
    <scope>IDENTIFICATION BY MASS SPECTROMETRY [LARGE SCALE ANALYSIS]</scope>
</reference>
<reference key="9">
    <citation type="journal article" date="2009" name="Science">
        <title>Global analysis of Cdk1 substrate phosphorylation sites provides insights into evolution.</title>
        <authorList>
            <person name="Holt L.J."/>
            <person name="Tuch B.B."/>
            <person name="Villen J."/>
            <person name="Johnson A.D."/>
            <person name="Gygi S.P."/>
            <person name="Morgan D.O."/>
        </authorList>
    </citation>
    <scope>PHOSPHORYLATION [LARGE SCALE ANALYSIS] AT SER-27; SER-487; SER-493; SER-504 AND THR-507</scope>
    <scope>IDENTIFICATION BY MASS SPECTROMETRY [LARGE SCALE ANALYSIS]</scope>
</reference>
<comment type="function">
    <text>Probably involved in transcription regulation via its interaction with the INO80 complex, a chromatin-remodeling complex.</text>
</comment>
<comment type="subunit">
    <text evidence="3">Component of the chromatin-remodeling INO80 complex, at least composed of ARP4, ARP5, ARP8, RVB1, RVB2, TAF14, NHP10, IES1, IES3, IES4, IES6, ACT1, IES2, IES5 and INO80.</text>
</comment>
<comment type="interaction">
    <interactant intactId="EBI-22775">
        <id>P43579</id>
    </interactant>
    <interactant intactId="EBI-12010">
        <id>Q03435</id>
        <label>NHP10</label>
    </interactant>
    <organismsDiffer>false</organismsDiffer>
    <experiments>5</experiments>
</comment>
<comment type="subcellular location">
    <subcellularLocation>
        <location evidence="4">Nucleus</location>
    </subcellularLocation>
</comment>
<comment type="miscellaneous">
    <text evidence="5">Present with 1400 molecules/cell in log phase SD medium.</text>
</comment>
<keyword id="KW-0175">Coiled coil</keyword>
<keyword id="KW-0903">Direct protein sequencing</keyword>
<keyword id="KW-0539">Nucleus</keyword>
<keyword id="KW-0597">Phosphoprotein</keyword>
<keyword id="KW-1185">Reference proteome</keyword>
<keyword id="KW-0804">Transcription</keyword>
<keyword id="KW-0805">Transcription regulation</keyword>
<protein>
    <recommendedName>
        <fullName>Ino eighty subunit 1</fullName>
    </recommendedName>
</protein>
<gene>
    <name type="primary">IES1</name>
    <name type="ordered locus">YFL013C</name>
</gene>
<evidence type="ECO:0000255" key="1"/>
<evidence type="ECO:0000256" key="2">
    <source>
        <dbReference type="SAM" id="MobiDB-lite"/>
    </source>
</evidence>
<evidence type="ECO:0000269" key="3">
    <source>
    </source>
</evidence>
<evidence type="ECO:0000269" key="4">
    <source>
    </source>
</evidence>
<evidence type="ECO:0000269" key="5">
    <source>
    </source>
</evidence>
<evidence type="ECO:0000305" key="6"/>
<evidence type="ECO:0007744" key="7">
    <source>
    </source>
</evidence>
<sequence>MGKRVYDPIHDTFQLREDNSDETKADSPMQSVKSGSQEEASPSSIQSETETVTTKSIPVIHEIEIDDKNDDDSTQSEEENTNILLNFEPSTVPEATGASTATGPVTTNTVRRKPKESNASKYNRHLKKPDGEPFNRKDIQFSFMQELLMDKRQIFTNVLKPLYKNSIVPINIDGDKLSINVTDKEYDARTFVFNDKLTFAQLYVLTIATSIKCSKILRDKLLLDQQVAFSTCVLALLVNIGRLNTTINFYLEMTSQLRTFHSVPVLQLHANDPKLLQDTPRLKSILKNLPWGNEQLSLMETYKKVDQNDGEVDTVNKFNIINMLFSICDNSGLIDKRFLSKYVEVESKAQEQDMVDEQNEVKETEAENEKQESKAAYATTLFDILDYSKYEPKDRSNILIWLLYIHLETNLSQEEVEESVRFFNGLEDGAPAGKFILRCTERSYDTDPEDELEFGANQRIKRREFMSKMEEGRKRERTNVTEVKKPSIGGDKSEEDGEGEDDKSEETVEETRSLLTPTPILESSSPMTLNRKKVTPQLPKVTPAAPTETEEEITSAAIIDKNDLNLTPLKKYNSSATVNKVDKLISLDLNKHVSENGKTQEEFLADLKKSQVPNRLKRRDIGLIKIFNEFEDIPVASVLGIRGKKRKKFKDNLLGFETDFMKNLGASKKVLLNKIERAEIDDEEATAMFKLE</sequence>
<proteinExistence type="evidence at protein level"/>
<accession>P43579</accession>
<accession>D6VTL6</accession>
<accession>E9P952</accession>
<name>IES1_YEAST</name>
<organism>
    <name type="scientific">Saccharomyces cerevisiae (strain ATCC 204508 / S288c)</name>
    <name type="common">Baker's yeast</name>
    <dbReference type="NCBI Taxonomy" id="559292"/>
    <lineage>
        <taxon>Eukaryota</taxon>
        <taxon>Fungi</taxon>
        <taxon>Dikarya</taxon>
        <taxon>Ascomycota</taxon>
        <taxon>Saccharomycotina</taxon>
        <taxon>Saccharomycetes</taxon>
        <taxon>Saccharomycetales</taxon>
        <taxon>Saccharomycetaceae</taxon>
        <taxon>Saccharomyces</taxon>
    </lineage>
</organism>
<feature type="chain" id="PRO_0000084153" description="Ino eighty subunit 1">
    <location>
        <begin position="1"/>
        <end position="692"/>
    </location>
</feature>
<feature type="region of interest" description="Disordered" evidence="2">
    <location>
        <begin position="1"/>
        <end position="133"/>
    </location>
</feature>
<feature type="region of interest" description="Disordered" evidence="2">
    <location>
        <begin position="465"/>
        <end position="550"/>
    </location>
</feature>
<feature type="coiled-coil region" evidence="1">
    <location>
        <begin position="340"/>
        <end position="385"/>
    </location>
</feature>
<feature type="compositionally biased region" description="Basic and acidic residues" evidence="2">
    <location>
        <begin position="1"/>
        <end position="25"/>
    </location>
</feature>
<feature type="compositionally biased region" description="Polar residues" evidence="2">
    <location>
        <begin position="28"/>
        <end position="56"/>
    </location>
</feature>
<feature type="compositionally biased region" description="Acidic residues" evidence="2">
    <location>
        <begin position="64"/>
        <end position="80"/>
    </location>
</feature>
<feature type="compositionally biased region" description="Polar residues" evidence="2">
    <location>
        <begin position="97"/>
        <end position="109"/>
    </location>
</feature>
<feature type="compositionally biased region" description="Basic and acidic residues" evidence="2">
    <location>
        <begin position="465"/>
        <end position="485"/>
    </location>
</feature>
<feature type="compositionally biased region" description="Acidic residues" evidence="2">
    <location>
        <begin position="493"/>
        <end position="504"/>
    </location>
</feature>
<feature type="compositionally biased region" description="Polar residues" evidence="2">
    <location>
        <begin position="513"/>
        <end position="528"/>
    </location>
</feature>
<feature type="modified residue" description="Phosphoserine" evidence="7">
    <location>
        <position position="27"/>
    </location>
</feature>
<feature type="modified residue" description="Phosphoserine" evidence="7">
    <location>
        <position position="487"/>
    </location>
</feature>
<feature type="modified residue" description="Phosphoserine" evidence="7">
    <location>
        <position position="493"/>
    </location>
</feature>
<feature type="modified residue" description="Phosphoserine" evidence="7">
    <location>
        <position position="504"/>
    </location>
</feature>
<feature type="modified residue" description="Phosphothreonine" evidence="7">
    <location>
        <position position="507"/>
    </location>
</feature>
<feature type="sequence conflict" description="In Ref. 3; AAU09719." evidence="6" ref="3">
    <original>D</original>
    <variation>G</variation>
    <location>
        <position position="219"/>
    </location>
</feature>
<dbReference type="EMBL" id="D50617">
    <property type="protein sequence ID" value="BAA09225.1"/>
    <property type="molecule type" value="Genomic_DNA"/>
</dbReference>
<dbReference type="EMBL" id="Z46255">
    <property type="protein sequence ID" value="CAA86347.1"/>
    <property type="molecule type" value="Genomic_DNA"/>
</dbReference>
<dbReference type="EMBL" id="AY723802">
    <property type="protein sequence ID" value="AAU09719.1"/>
    <property type="molecule type" value="Genomic_DNA"/>
</dbReference>
<dbReference type="EMBL" id="BK006940">
    <property type="protein sequence ID" value="DAA12426.1"/>
    <property type="molecule type" value="Genomic_DNA"/>
</dbReference>
<dbReference type="PIR" id="S48316">
    <property type="entry name" value="S48316"/>
</dbReference>
<dbReference type="RefSeq" id="NP_116641.1">
    <property type="nucleotide sequence ID" value="NM_001179953.1"/>
</dbReference>
<dbReference type="BioGRID" id="31133">
    <property type="interactions" value="511"/>
</dbReference>
<dbReference type="ComplexPortal" id="CPX-863">
    <property type="entry name" value="INO80 chromatin remodeling complex"/>
</dbReference>
<dbReference type="DIP" id="DIP-3869N"/>
<dbReference type="FunCoup" id="P43579">
    <property type="interactions" value="272"/>
</dbReference>
<dbReference type="IntAct" id="P43579">
    <property type="interactions" value="28"/>
</dbReference>
<dbReference type="MINT" id="P43579"/>
<dbReference type="STRING" id="4932.YFL013C"/>
<dbReference type="iPTMnet" id="P43579"/>
<dbReference type="PaxDb" id="4932-YFL013C"/>
<dbReference type="PeptideAtlas" id="P43579"/>
<dbReference type="EnsemblFungi" id="YFL013C_mRNA">
    <property type="protein sequence ID" value="YFL013C"/>
    <property type="gene ID" value="YFL013C"/>
</dbReference>
<dbReference type="GeneID" id="850534"/>
<dbReference type="KEGG" id="sce:YFL013C"/>
<dbReference type="AGR" id="SGD:S000001881"/>
<dbReference type="SGD" id="S000001881">
    <property type="gene designation" value="IES1"/>
</dbReference>
<dbReference type="VEuPathDB" id="FungiDB:YFL013C"/>
<dbReference type="eggNOG" id="ENOG502QVDM">
    <property type="taxonomic scope" value="Eukaryota"/>
</dbReference>
<dbReference type="HOGENOM" id="CLU_409922_0_0_1"/>
<dbReference type="InParanoid" id="P43579"/>
<dbReference type="OMA" id="VYDPIHD"/>
<dbReference type="OrthoDB" id="5413003at2759"/>
<dbReference type="BioCyc" id="YEAST:G3O-30443-MONOMER"/>
<dbReference type="BioGRID-ORCS" id="850534">
    <property type="hits" value="0 hits in 10 CRISPR screens"/>
</dbReference>
<dbReference type="PRO" id="PR:P43579"/>
<dbReference type="Proteomes" id="UP000002311">
    <property type="component" value="Chromosome VI"/>
</dbReference>
<dbReference type="RNAct" id="P43579">
    <property type="molecule type" value="protein"/>
</dbReference>
<dbReference type="GO" id="GO:0005829">
    <property type="term" value="C:cytosol"/>
    <property type="evidence" value="ECO:0000314"/>
    <property type="project" value="SGD"/>
</dbReference>
<dbReference type="GO" id="GO:0031011">
    <property type="term" value="C:Ino80 complex"/>
    <property type="evidence" value="ECO:0000314"/>
    <property type="project" value="SGD"/>
</dbReference>
<dbReference type="GO" id="GO:0005634">
    <property type="term" value="C:nucleus"/>
    <property type="evidence" value="ECO:0000314"/>
    <property type="project" value="SGD"/>
</dbReference>
<dbReference type="GO" id="GO:0006338">
    <property type="term" value="P:chromatin remodeling"/>
    <property type="evidence" value="ECO:0000314"/>
    <property type="project" value="SGD"/>
</dbReference>
<dbReference type="GO" id="GO:0006281">
    <property type="term" value="P:DNA repair"/>
    <property type="evidence" value="ECO:0000303"/>
    <property type="project" value="ComplexPortal"/>
</dbReference>
<dbReference type="GO" id="GO:0006355">
    <property type="term" value="P:regulation of DNA-templated transcription"/>
    <property type="evidence" value="ECO:0000303"/>
    <property type="project" value="ComplexPortal"/>
</dbReference>
<dbReference type="InterPro" id="IPR038014">
    <property type="entry name" value="Ies1"/>
</dbReference>
<dbReference type="PANTHER" id="PTHR37287">
    <property type="entry name" value="INO EIGHTY SUBUNIT 1"/>
    <property type="match status" value="1"/>
</dbReference>
<dbReference type="PANTHER" id="PTHR37287:SF1">
    <property type="entry name" value="INO EIGHTY SUBUNIT 1"/>
    <property type="match status" value="1"/>
</dbReference>